<sequence>MTTLAIDIGGTKLAAALIGADGQIRDRRELPTPASQTPQALRDALSALVSPLQAHAQRVAIASTGIIRDGSLLALNPHNLGGLLHFPLVKTLEQLTNLPTIAINDAQAAAWAEYQALDGDITDMVFITVSTGVGGGVVSGGKLRTGPGGLAGHIGHTLADPHGPVCGCGRTGCVEAIASGRGIATAAQGELAGANAKTIFTRAGQGDEQAQQLIHRSARTLARLIADIKATTDCQCVVVGGSVGLAEGYLALVETYLAQEPAAFHVDLLAAHYRHDAGLLGAALLAQGEIL</sequence>
<dbReference type="EC" id="2.7.1.60"/>
<dbReference type="EMBL" id="AE014075">
    <property type="protein sequence ID" value="AAN82416.1"/>
    <property type="status" value="ALT_INIT"/>
    <property type="molecule type" value="Genomic_DNA"/>
</dbReference>
<dbReference type="SMR" id="Q8FD60"/>
<dbReference type="STRING" id="199310.c3976"/>
<dbReference type="KEGG" id="ecc:c3976"/>
<dbReference type="eggNOG" id="COG1940">
    <property type="taxonomic scope" value="Bacteria"/>
</dbReference>
<dbReference type="HOGENOM" id="CLU_036604_0_4_6"/>
<dbReference type="UniPathway" id="UPA00629">
    <property type="reaction ID" value="UER00681"/>
</dbReference>
<dbReference type="Proteomes" id="UP000001410">
    <property type="component" value="Chromosome"/>
</dbReference>
<dbReference type="GO" id="GO:0005524">
    <property type="term" value="F:ATP binding"/>
    <property type="evidence" value="ECO:0007669"/>
    <property type="project" value="UniProtKB-UniRule"/>
</dbReference>
<dbReference type="GO" id="GO:0009384">
    <property type="term" value="F:N-acylmannosamine kinase activity"/>
    <property type="evidence" value="ECO:0007669"/>
    <property type="project" value="UniProtKB-UniRule"/>
</dbReference>
<dbReference type="GO" id="GO:0008270">
    <property type="term" value="F:zinc ion binding"/>
    <property type="evidence" value="ECO:0007669"/>
    <property type="project" value="UniProtKB-UniRule"/>
</dbReference>
<dbReference type="GO" id="GO:0019262">
    <property type="term" value="P:N-acetylneuraminate catabolic process"/>
    <property type="evidence" value="ECO:0007669"/>
    <property type="project" value="UniProtKB-UniRule"/>
</dbReference>
<dbReference type="CDD" id="cd24069">
    <property type="entry name" value="ASKHA_NBD_ROK_EcNanK-like"/>
    <property type="match status" value="1"/>
</dbReference>
<dbReference type="FunFam" id="3.30.420.40:FF:000062">
    <property type="entry name" value="N-acetylmannosamine kinase"/>
    <property type="match status" value="1"/>
</dbReference>
<dbReference type="FunFam" id="3.30.420.40:FF:000063">
    <property type="entry name" value="N-acetylmannosamine kinase"/>
    <property type="match status" value="1"/>
</dbReference>
<dbReference type="Gene3D" id="3.30.420.40">
    <property type="match status" value="2"/>
</dbReference>
<dbReference type="HAMAP" id="MF_01234">
    <property type="entry name" value="ManNAc_kinase"/>
    <property type="match status" value="1"/>
</dbReference>
<dbReference type="InterPro" id="IPR043129">
    <property type="entry name" value="ATPase_NBD"/>
</dbReference>
<dbReference type="InterPro" id="IPR023945">
    <property type="entry name" value="ManNAc_kinase_bac"/>
</dbReference>
<dbReference type="InterPro" id="IPR000600">
    <property type="entry name" value="ROK"/>
</dbReference>
<dbReference type="InterPro" id="IPR049874">
    <property type="entry name" value="ROK_cs"/>
</dbReference>
<dbReference type="NCBIfam" id="NF047821">
    <property type="entry name" value="NactlManKinNanK"/>
    <property type="match status" value="1"/>
</dbReference>
<dbReference type="NCBIfam" id="NF003461">
    <property type="entry name" value="PRK05082.1"/>
    <property type="match status" value="1"/>
</dbReference>
<dbReference type="PANTHER" id="PTHR18964:SF169">
    <property type="entry name" value="N-ACETYLMANNOSAMINE KINASE"/>
    <property type="match status" value="1"/>
</dbReference>
<dbReference type="PANTHER" id="PTHR18964">
    <property type="entry name" value="ROK (REPRESSOR, ORF, KINASE) FAMILY"/>
    <property type="match status" value="1"/>
</dbReference>
<dbReference type="Pfam" id="PF00480">
    <property type="entry name" value="ROK"/>
    <property type="match status" value="1"/>
</dbReference>
<dbReference type="SUPFAM" id="SSF53067">
    <property type="entry name" value="Actin-like ATPase domain"/>
    <property type="match status" value="1"/>
</dbReference>
<dbReference type="PROSITE" id="PS01125">
    <property type="entry name" value="ROK"/>
    <property type="match status" value="1"/>
</dbReference>
<reference key="1">
    <citation type="journal article" date="2002" name="Proc. Natl. Acad. Sci. U.S.A.">
        <title>Extensive mosaic structure revealed by the complete genome sequence of uropathogenic Escherichia coli.</title>
        <authorList>
            <person name="Welch R.A."/>
            <person name="Burland V."/>
            <person name="Plunkett G. III"/>
            <person name="Redford P."/>
            <person name="Roesch P."/>
            <person name="Rasko D."/>
            <person name="Buckles E.L."/>
            <person name="Liou S.-R."/>
            <person name="Boutin A."/>
            <person name="Hackett J."/>
            <person name="Stroud D."/>
            <person name="Mayhew G.F."/>
            <person name="Rose D.J."/>
            <person name="Zhou S."/>
            <person name="Schwartz D.C."/>
            <person name="Perna N.T."/>
            <person name="Mobley H.L.T."/>
            <person name="Donnenberg M.S."/>
            <person name="Blattner F.R."/>
        </authorList>
    </citation>
    <scope>NUCLEOTIDE SEQUENCE [LARGE SCALE GENOMIC DNA]</scope>
    <source>
        <strain>CFT073 / ATCC 700928 / UPEC</strain>
    </source>
</reference>
<name>NANK1_ECOL6</name>
<accession>Q8FD60</accession>
<proteinExistence type="inferred from homology"/>
<comment type="function">
    <text evidence="1">Catalyzes the phosphorylation of N-acetylmannosamine (ManNAc) to ManNAc-6-P.</text>
</comment>
<comment type="catalytic activity">
    <reaction>
        <text>an N-acyl-D-mannosamine + ATP = an N-acyl-D-mannosamine 6-phosphate + ADP + H(+)</text>
        <dbReference type="Rhea" id="RHEA:23832"/>
        <dbReference type="ChEBI" id="CHEBI:15378"/>
        <dbReference type="ChEBI" id="CHEBI:16062"/>
        <dbReference type="ChEBI" id="CHEBI:30616"/>
        <dbReference type="ChEBI" id="CHEBI:57666"/>
        <dbReference type="ChEBI" id="CHEBI:456216"/>
        <dbReference type="EC" id="2.7.1.60"/>
    </reaction>
</comment>
<comment type="pathway">
    <text>Amino-sugar metabolism; N-acetylneuraminate degradation; D-fructose 6-phosphate from N-acetylneuraminate: step 2/5.</text>
</comment>
<comment type="subunit">
    <text evidence="1">Homodimer.</text>
</comment>
<comment type="similarity">
    <text evidence="3">Belongs to the ROK (NagC/XylR) family. NanK subfamily.</text>
</comment>
<comment type="sequence caution" evidence="3">
    <conflict type="erroneous initiation">
        <sequence resource="EMBL-CDS" id="AAN82416"/>
    </conflict>
</comment>
<keyword id="KW-0067">ATP-binding</keyword>
<keyword id="KW-0119">Carbohydrate metabolism</keyword>
<keyword id="KW-0418">Kinase</keyword>
<keyword id="KW-0479">Metal-binding</keyword>
<keyword id="KW-0547">Nucleotide-binding</keyword>
<keyword id="KW-1185">Reference proteome</keyword>
<keyword id="KW-0808">Transferase</keyword>
<keyword id="KW-0862">Zinc</keyword>
<feature type="chain" id="PRO_0000095697" description="N-acetylmannosamine kinase">
    <location>
        <begin position="1"/>
        <end position="291"/>
    </location>
</feature>
<feature type="binding site" evidence="2">
    <location>
        <begin position="5"/>
        <end position="12"/>
    </location>
    <ligand>
        <name>ATP</name>
        <dbReference type="ChEBI" id="CHEBI:30616"/>
    </ligand>
</feature>
<feature type="binding site" evidence="2">
    <location>
        <begin position="132"/>
        <end position="139"/>
    </location>
    <ligand>
        <name>ATP</name>
        <dbReference type="ChEBI" id="CHEBI:30616"/>
    </ligand>
</feature>
<feature type="binding site" evidence="1">
    <location>
        <position position="156"/>
    </location>
    <ligand>
        <name>Zn(2+)</name>
        <dbReference type="ChEBI" id="CHEBI:29105"/>
    </ligand>
</feature>
<feature type="binding site" evidence="1">
    <location>
        <position position="166"/>
    </location>
    <ligand>
        <name>Zn(2+)</name>
        <dbReference type="ChEBI" id="CHEBI:29105"/>
    </ligand>
</feature>
<feature type="binding site" evidence="1">
    <location>
        <position position="168"/>
    </location>
    <ligand>
        <name>Zn(2+)</name>
        <dbReference type="ChEBI" id="CHEBI:29105"/>
    </ligand>
</feature>
<feature type="binding site" evidence="1">
    <location>
        <position position="173"/>
    </location>
    <ligand>
        <name>Zn(2+)</name>
        <dbReference type="ChEBI" id="CHEBI:29105"/>
    </ligand>
</feature>
<evidence type="ECO:0000250" key="1"/>
<evidence type="ECO:0000255" key="2"/>
<evidence type="ECO:0000305" key="3"/>
<gene>
    <name type="primary">nanK1</name>
    <name type="ordered locus">c3976</name>
</gene>
<protein>
    <recommendedName>
        <fullName>N-acetylmannosamine kinase</fullName>
        <ecNumber>2.7.1.60</ecNumber>
    </recommendedName>
    <alternativeName>
        <fullName>ManNAc kinase</fullName>
    </alternativeName>
    <alternativeName>
        <fullName>N-acetyl-D-mannosamine kinase</fullName>
    </alternativeName>
</protein>
<organism>
    <name type="scientific">Escherichia coli O6:H1 (strain CFT073 / ATCC 700928 / UPEC)</name>
    <dbReference type="NCBI Taxonomy" id="199310"/>
    <lineage>
        <taxon>Bacteria</taxon>
        <taxon>Pseudomonadati</taxon>
        <taxon>Pseudomonadota</taxon>
        <taxon>Gammaproteobacteria</taxon>
        <taxon>Enterobacterales</taxon>
        <taxon>Enterobacteriaceae</taxon>
        <taxon>Escherichia</taxon>
    </lineage>
</organism>